<evidence type="ECO:0000255" key="1">
    <source>
        <dbReference type="HAMAP-Rule" id="MF_01018"/>
    </source>
</evidence>
<protein>
    <recommendedName>
        <fullName evidence="1">ATP phosphoribosyltransferase</fullName>
        <shortName evidence="1">ATP-PRT</shortName>
        <shortName evidence="1">ATP-PRTase</shortName>
        <ecNumber evidence="1">2.4.2.17</ecNumber>
    </recommendedName>
</protein>
<organism>
    <name type="scientific">Listeria welshimeri serovar 6b (strain ATCC 35897 / DSM 20650 / CCUG 15529 / CIP 8149 / NCTC 11857 / SLCC 5334 / V8)</name>
    <dbReference type="NCBI Taxonomy" id="386043"/>
    <lineage>
        <taxon>Bacteria</taxon>
        <taxon>Bacillati</taxon>
        <taxon>Bacillota</taxon>
        <taxon>Bacilli</taxon>
        <taxon>Bacillales</taxon>
        <taxon>Listeriaceae</taxon>
        <taxon>Listeria</taxon>
    </lineage>
</organism>
<keyword id="KW-0028">Amino-acid biosynthesis</keyword>
<keyword id="KW-0067">ATP-binding</keyword>
<keyword id="KW-0963">Cytoplasm</keyword>
<keyword id="KW-0328">Glycosyltransferase</keyword>
<keyword id="KW-0368">Histidine biosynthesis</keyword>
<keyword id="KW-0547">Nucleotide-binding</keyword>
<keyword id="KW-0808">Transferase</keyword>
<name>HIS1_LISW6</name>
<sequence length="213" mass="23790">MKALKIALTKGRLERDAVALLKKAGIDCSSMLDKKRKLIFHSNSQPVSFILVKAVDVMTYVKHGVADIGIVGKDVLMEASKSHYEMLDLEIGKCQFCLASTPDFDPSNYRRKIIATKYPTVASKFFREKGEDVEIIKIEGSVEIAPVLGLADAIIDIVETGSTLKENGLLIYEKMYPISARLIVNKASLKQNKTQIFQLIDQLEQAIKEERTK</sequence>
<comment type="function">
    <text evidence="1">Catalyzes the condensation of ATP and 5-phosphoribose 1-diphosphate to form N'-(5'-phosphoribosyl)-ATP (PR-ATP). Has a crucial role in the pathway because the rate of histidine biosynthesis seems to be controlled primarily by regulation of HisG enzymatic activity.</text>
</comment>
<comment type="catalytic activity">
    <reaction evidence="1">
        <text>1-(5-phospho-beta-D-ribosyl)-ATP + diphosphate = 5-phospho-alpha-D-ribose 1-diphosphate + ATP</text>
        <dbReference type="Rhea" id="RHEA:18473"/>
        <dbReference type="ChEBI" id="CHEBI:30616"/>
        <dbReference type="ChEBI" id="CHEBI:33019"/>
        <dbReference type="ChEBI" id="CHEBI:58017"/>
        <dbReference type="ChEBI" id="CHEBI:73183"/>
        <dbReference type="EC" id="2.4.2.17"/>
    </reaction>
</comment>
<comment type="pathway">
    <text evidence="1">Amino-acid biosynthesis; L-histidine biosynthesis; L-histidine from 5-phospho-alpha-D-ribose 1-diphosphate: step 1/9.</text>
</comment>
<comment type="subunit">
    <text evidence="1">Heteromultimer composed of HisG and HisZ subunits.</text>
</comment>
<comment type="subcellular location">
    <subcellularLocation>
        <location evidence="1">Cytoplasm</location>
    </subcellularLocation>
</comment>
<comment type="domain">
    <text>Lacks the C-terminal regulatory region which is replaced by HisZ.</text>
</comment>
<comment type="similarity">
    <text evidence="1">Belongs to the ATP phosphoribosyltransferase family. Short subfamily.</text>
</comment>
<reference key="1">
    <citation type="journal article" date="2006" name="J. Bacteriol.">
        <title>Whole-genome sequence of Listeria welshimeri reveals common steps in genome reduction with Listeria innocua as compared to Listeria monocytogenes.</title>
        <authorList>
            <person name="Hain T."/>
            <person name="Steinweg C."/>
            <person name="Kuenne C.T."/>
            <person name="Billion A."/>
            <person name="Ghai R."/>
            <person name="Chatterjee S.S."/>
            <person name="Domann E."/>
            <person name="Kaerst U."/>
            <person name="Goesmann A."/>
            <person name="Bekel T."/>
            <person name="Bartels D."/>
            <person name="Kaiser O."/>
            <person name="Meyer F."/>
            <person name="Puehler A."/>
            <person name="Weisshaar B."/>
            <person name="Wehland J."/>
            <person name="Liang C."/>
            <person name="Dandekar T."/>
            <person name="Lampidis R."/>
            <person name="Kreft J."/>
            <person name="Goebel W."/>
            <person name="Chakraborty T."/>
        </authorList>
    </citation>
    <scope>NUCLEOTIDE SEQUENCE [LARGE SCALE GENOMIC DNA]</scope>
    <source>
        <strain>ATCC 35897 / DSM 20650 / CCUG 15529 / CIP 8149 / NCTC 11857 / SLCC 5334 / V8</strain>
    </source>
</reference>
<dbReference type="EC" id="2.4.2.17" evidence="1"/>
<dbReference type="EMBL" id="AM263198">
    <property type="protein sequence ID" value="CAK19952.1"/>
    <property type="molecule type" value="Genomic_DNA"/>
</dbReference>
<dbReference type="RefSeq" id="WP_011701379.1">
    <property type="nucleotide sequence ID" value="NC_008555.1"/>
</dbReference>
<dbReference type="SMR" id="A0AG20"/>
<dbReference type="STRING" id="386043.lwe0534"/>
<dbReference type="GeneID" id="61188422"/>
<dbReference type="KEGG" id="lwe:lwe0534"/>
<dbReference type="eggNOG" id="COG0040">
    <property type="taxonomic scope" value="Bacteria"/>
</dbReference>
<dbReference type="HOGENOM" id="CLU_038115_2_0_9"/>
<dbReference type="OrthoDB" id="9801867at2"/>
<dbReference type="UniPathway" id="UPA00031">
    <property type="reaction ID" value="UER00006"/>
</dbReference>
<dbReference type="Proteomes" id="UP000000779">
    <property type="component" value="Chromosome"/>
</dbReference>
<dbReference type="GO" id="GO:0005737">
    <property type="term" value="C:cytoplasm"/>
    <property type="evidence" value="ECO:0007669"/>
    <property type="project" value="UniProtKB-SubCell"/>
</dbReference>
<dbReference type="GO" id="GO:0005524">
    <property type="term" value="F:ATP binding"/>
    <property type="evidence" value="ECO:0007669"/>
    <property type="project" value="UniProtKB-KW"/>
</dbReference>
<dbReference type="GO" id="GO:0003879">
    <property type="term" value="F:ATP phosphoribosyltransferase activity"/>
    <property type="evidence" value="ECO:0007669"/>
    <property type="project" value="UniProtKB-UniRule"/>
</dbReference>
<dbReference type="GO" id="GO:0000105">
    <property type="term" value="P:L-histidine biosynthetic process"/>
    <property type="evidence" value="ECO:0007669"/>
    <property type="project" value="UniProtKB-UniRule"/>
</dbReference>
<dbReference type="CDD" id="cd13595">
    <property type="entry name" value="PBP2_HisGs"/>
    <property type="match status" value="1"/>
</dbReference>
<dbReference type="FunFam" id="3.40.190.10:FF:000008">
    <property type="entry name" value="ATP phosphoribosyltransferase"/>
    <property type="match status" value="1"/>
</dbReference>
<dbReference type="FunFam" id="3.40.190.10:FF:000011">
    <property type="entry name" value="ATP phosphoribosyltransferase"/>
    <property type="match status" value="1"/>
</dbReference>
<dbReference type="Gene3D" id="3.40.190.10">
    <property type="entry name" value="Periplasmic binding protein-like II"/>
    <property type="match status" value="2"/>
</dbReference>
<dbReference type="HAMAP" id="MF_01018">
    <property type="entry name" value="HisG_Short"/>
    <property type="match status" value="1"/>
</dbReference>
<dbReference type="InterPro" id="IPR013820">
    <property type="entry name" value="ATP_PRibTrfase_cat"/>
</dbReference>
<dbReference type="InterPro" id="IPR018198">
    <property type="entry name" value="ATP_PRibTrfase_CS"/>
</dbReference>
<dbReference type="InterPro" id="IPR001348">
    <property type="entry name" value="ATP_PRibTrfase_HisG"/>
</dbReference>
<dbReference type="InterPro" id="IPR024893">
    <property type="entry name" value="ATP_PRibTrfase_HisG_short"/>
</dbReference>
<dbReference type="NCBIfam" id="TIGR00070">
    <property type="entry name" value="hisG"/>
    <property type="match status" value="1"/>
</dbReference>
<dbReference type="PANTHER" id="PTHR21403:SF8">
    <property type="entry name" value="ATP PHOSPHORIBOSYLTRANSFERASE"/>
    <property type="match status" value="1"/>
</dbReference>
<dbReference type="PANTHER" id="PTHR21403">
    <property type="entry name" value="ATP PHOSPHORIBOSYLTRANSFERASE ATP-PRTASE"/>
    <property type="match status" value="1"/>
</dbReference>
<dbReference type="Pfam" id="PF01634">
    <property type="entry name" value="HisG"/>
    <property type="match status" value="1"/>
</dbReference>
<dbReference type="SUPFAM" id="SSF53850">
    <property type="entry name" value="Periplasmic binding protein-like II"/>
    <property type="match status" value="1"/>
</dbReference>
<dbReference type="PROSITE" id="PS01316">
    <property type="entry name" value="ATP_P_PHORIBOSYLTR"/>
    <property type="match status" value="1"/>
</dbReference>
<accession>A0AG20</accession>
<gene>
    <name evidence="1" type="primary">hisG</name>
    <name type="ordered locus">lwe0534</name>
</gene>
<feature type="chain" id="PRO_1000063285" description="ATP phosphoribosyltransferase">
    <location>
        <begin position="1"/>
        <end position="213"/>
    </location>
</feature>
<proteinExistence type="inferred from homology"/>